<sequence>MSKKIMATQKVIIASLNPAKITAVESAFTSAFPDGTFEFVGVNVPSEVADQPMSDSETHLGALNRVRNAKACRADGAFYVGLEAGIDGNVTFAWMVIESHTHRGESRSASLMLPPNVIAKLPNANELGDVMDEVFGTENIKQKGGAISLLTQNQLTRSSVYHQALILALIPFTNPEHFPANLS</sequence>
<organism>
    <name type="scientific">Vibrio vulnificus (strain YJ016)</name>
    <dbReference type="NCBI Taxonomy" id="196600"/>
    <lineage>
        <taxon>Bacteria</taxon>
        <taxon>Pseudomonadati</taxon>
        <taxon>Pseudomonadota</taxon>
        <taxon>Gammaproteobacteria</taxon>
        <taxon>Vibrionales</taxon>
        <taxon>Vibrionaceae</taxon>
        <taxon>Vibrio</taxon>
    </lineage>
</organism>
<protein>
    <recommendedName>
        <fullName evidence="1">Inosine/xanthosine triphosphatase</fullName>
        <shortName evidence="1">ITPase/XTPase</shortName>
        <ecNumber evidence="1">3.6.1.73</ecNumber>
    </recommendedName>
    <alternativeName>
        <fullName evidence="1">Non-canonical purine NTP phosphatase</fullName>
    </alternativeName>
    <alternativeName>
        <fullName evidence="1">Non-standard purine NTP phosphatase</fullName>
    </alternativeName>
    <alternativeName>
        <fullName evidence="1">Nucleoside-triphosphate phosphatase</fullName>
        <shortName evidence="1">NTPase</shortName>
    </alternativeName>
</protein>
<evidence type="ECO:0000255" key="1">
    <source>
        <dbReference type="HAMAP-Rule" id="MF_00648"/>
    </source>
</evidence>
<reference key="1">
    <citation type="journal article" date="2003" name="Genome Res.">
        <title>Comparative genome analysis of Vibrio vulnificus, a marine pathogen.</title>
        <authorList>
            <person name="Chen C.-Y."/>
            <person name="Wu K.-M."/>
            <person name="Chang Y.-C."/>
            <person name="Chang C.-H."/>
            <person name="Tsai H.-C."/>
            <person name="Liao T.-L."/>
            <person name="Liu Y.-M."/>
            <person name="Chen H.-J."/>
            <person name="Shen A.B.-T."/>
            <person name="Li J.-C."/>
            <person name="Su T.-L."/>
            <person name="Shao C.-P."/>
            <person name="Lee C.-T."/>
            <person name="Hor L.-I."/>
            <person name="Tsai S.-F."/>
        </authorList>
    </citation>
    <scope>NUCLEOTIDE SEQUENCE [LARGE SCALE GENOMIC DNA]</scope>
    <source>
        <strain>YJ016</strain>
    </source>
</reference>
<proteinExistence type="inferred from homology"/>
<dbReference type="EC" id="3.6.1.73" evidence="1"/>
<dbReference type="EMBL" id="BA000037">
    <property type="protein sequence ID" value="BAC93472.1"/>
    <property type="molecule type" value="Genomic_DNA"/>
</dbReference>
<dbReference type="SMR" id="Q7MNK7"/>
<dbReference type="STRING" id="672.VV93_v1c06450"/>
<dbReference type="KEGG" id="vvy:VV0708"/>
<dbReference type="eggNOG" id="COG1986">
    <property type="taxonomic scope" value="Bacteria"/>
</dbReference>
<dbReference type="HOGENOM" id="CLU_087417_1_0_6"/>
<dbReference type="Proteomes" id="UP000002675">
    <property type="component" value="Chromosome I"/>
</dbReference>
<dbReference type="GO" id="GO:0103023">
    <property type="term" value="F:ITPase activity"/>
    <property type="evidence" value="ECO:0007669"/>
    <property type="project" value="UniProtKB-EC"/>
</dbReference>
<dbReference type="GO" id="GO:0046872">
    <property type="term" value="F:metal ion binding"/>
    <property type="evidence" value="ECO:0007669"/>
    <property type="project" value="UniProtKB-KW"/>
</dbReference>
<dbReference type="GO" id="GO:0000166">
    <property type="term" value="F:nucleotide binding"/>
    <property type="evidence" value="ECO:0007669"/>
    <property type="project" value="UniProtKB-KW"/>
</dbReference>
<dbReference type="GO" id="GO:0017111">
    <property type="term" value="F:ribonucleoside triphosphate phosphatase activity"/>
    <property type="evidence" value="ECO:0000250"/>
    <property type="project" value="UniProtKB"/>
</dbReference>
<dbReference type="GO" id="GO:0009117">
    <property type="term" value="P:nucleotide metabolic process"/>
    <property type="evidence" value="ECO:0007669"/>
    <property type="project" value="UniProtKB-KW"/>
</dbReference>
<dbReference type="GO" id="GO:0006772">
    <property type="term" value="P:thiamine metabolic process"/>
    <property type="evidence" value="ECO:0007669"/>
    <property type="project" value="TreeGrafter"/>
</dbReference>
<dbReference type="FunFam" id="3.90.950.10:FF:000002">
    <property type="entry name" value="Inosine/xanthosine triphosphatase"/>
    <property type="match status" value="1"/>
</dbReference>
<dbReference type="Gene3D" id="3.90.950.10">
    <property type="match status" value="1"/>
</dbReference>
<dbReference type="HAMAP" id="MF_00648">
    <property type="entry name" value="Non_canon_purine_NTPase_YjjX"/>
    <property type="match status" value="1"/>
</dbReference>
<dbReference type="InterPro" id="IPR029001">
    <property type="entry name" value="ITPase-like_fam"/>
</dbReference>
<dbReference type="InterPro" id="IPR002786">
    <property type="entry name" value="Non_canon_purine_NTPase"/>
</dbReference>
<dbReference type="InterPro" id="IPR026533">
    <property type="entry name" value="NTPase/PRRC1"/>
</dbReference>
<dbReference type="InterPro" id="IPR050299">
    <property type="entry name" value="YjjX_NTPase"/>
</dbReference>
<dbReference type="NCBIfam" id="TIGR00258">
    <property type="entry name" value="inosine/xanthosine triphosphatase"/>
    <property type="match status" value="1"/>
</dbReference>
<dbReference type="NCBIfam" id="NF003459">
    <property type="entry name" value="PRK05074.1"/>
    <property type="match status" value="1"/>
</dbReference>
<dbReference type="PANTHER" id="PTHR34699">
    <property type="match status" value="1"/>
</dbReference>
<dbReference type="PANTHER" id="PTHR34699:SF2">
    <property type="entry name" value="NON-CANONICAL PURINE NTP PHOSPHATASE_PRRC1 DOMAIN-CONTAINING PROTEIN"/>
    <property type="match status" value="1"/>
</dbReference>
<dbReference type="Pfam" id="PF01931">
    <property type="entry name" value="NTPase_I-T"/>
    <property type="match status" value="1"/>
</dbReference>
<dbReference type="SUPFAM" id="SSF52972">
    <property type="entry name" value="ITPase-like"/>
    <property type="match status" value="1"/>
</dbReference>
<keyword id="KW-0378">Hydrolase</keyword>
<keyword id="KW-0460">Magnesium</keyword>
<keyword id="KW-0464">Manganese</keyword>
<keyword id="KW-0479">Metal-binding</keyword>
<keyword id="KW-0546">Nucleotide metabolism</keyword>
<keyword id="KW-0547">Nucleotide-binding</keyword>
<name>NCPP_VIBVY</name>
<accession>Q7MNK7</accession>
<comment type="function">
    <text evidence="1">Phosphatase that hydrolyzes non-canonical purine nucleotides such as XTP and ITP to their respective diphosphate derivatives. Probably excludes non-canonical purines from DNA/RNA precursor pool, thus preventing their incorporation into DNA/RNA and avoiding chromosomal lesions.</text>
</comment>
<comment type="catalytic activity">
    <reaction evidence="1">
        <text>XTP + H2O = XDP + phosphate + H(+)</text>
        <dbReference type="Rhea" id="RHEA:28406"/>
        <dbReference type="ChEBI" id="CHEBI:15377"/>
        <dbReference type="ChEBI" id="CHEBI:15378"/>
        <dbReference type="ChEBI" id="CHEBI:43474"/>
        <dbReference type="ChEBI" id="CHEBI:59884"/>
        <dbReference type="ChEBI" id="CHEBI:61314"/>
        <dbReference type="EC" id="3.6.1.73"/>
    </reaction>
</comment>
<comment type="catalytic activity">
    <reaction evidence="1">
        <text>ITP + H2O = IDP + phosphate + H(+)</text>
        <dbReference type="Rhea" id="RHEA:28330"/>
        <dbReference type="ChEBI" id="CHEBI:15377"/>
        <dbReference type="ChEBI" id="CHEBI:15378"/>
        <dbReference type="ChEBI" id="CHEBI:43474"/>
        <dbReference type="ChEBI" id="CHEBI:58280"/>
        <dbReference type="ChEBI" id="CHEBI:61402"/>
        <dbReference type="EC" id="3.6.1.73"/>
    </reaction>
</comment>
<comment type="cofactor">
    <cofactor evidence="1">
        <name>Mg(2+)</name>
        <dbReference type="ChEBI" id="CHEBI:18420"/>
    </cofactor>
    <cofactor evidence="1">
        <name>Mn(2+)</name>
        <dbReference type="ChEBI" id="CHEBI:29035"/>
    </cofactor>
    <text evidence="1">Binds 1 divalent metal cation per subunit; can use either Mg(2+) or Mn(2+).</text>
</comment>
<comment type="subunit">
    <text evidence="1">Homodimer.</text>
</comment>
<comment type="similarity">
    <text evidence="1">Belongs to the YjjX NTPase family.</text>
</comment>
<feature type="chain" id="PRO_0000156354" description="Inosine/xanthosine triphosphatase">
    <location>
        <begin position="1"/>
        <end position="183"/>
    </location>
</feature>
<feature type="binding site" evidence="1">
    <location>
        <begin position="75"/>
        <end position="76"/>
    </location>
    <ligand>
        <name>substrate</name>
    </ligand>
</feature>
<feature type="binding site" evidence="1">
    <location>
        <position position="75"/>
    </location>
    <ligand>
        <name>Mg(2+)</name>
        <dbReference type="ChEBI" id="CHEBI:18420"/>
    </ligand>
</feature>
<gene>
    <name type="ordered locus">VV0708</name>
</gene>